<name>3BHS_MYCTO</name>
<proteinExistence type="inferred from homology"/>
<sequence length="370" mass="40742">MLRRMGDASLTTELGRVLVTGGAGFVGANLVTTLLDRGHWVRSFDRAPSLLPAHPQLEVLQGDITDADVCAAAVDGIDTIFHTAAIIELMGGASVTDEYRQRSFAVNVGGTENLLHAGQRAGVQRFVYTSSNSVVMGGQNIAGGDETLPYTDRFNDLYTETKVVAERFVLAQNGVDGMLTCAIRPSGIWGNGDQTMFRKLFESVLKGHVKVLVGRKSARLDNSYVHNLIHGFILAAAHLVPDGTAPGQAYFINDAEPINMFEFARPVLEACGQRWPKMRISGPAVRWVMTGWQRLHFRFGFPAPLLEPLAVERLYLDNYFSIAKARRDLGYEPLFTTQQALTECLPYYVSLFEQMKNEARAEKTAATVKP</sequence>
<reference key="1">
    <citation type="journal article" date="2002" name="J. Bacteriol.">
        <title>Whole-genome comparison of Mycobacterium tuberculosis clinical and laboratory strains.</title>
        <authorList>
            <person name="Fleischmann R.D."/>
            <person name="Alland D."/>
            <person name="Eisen J.A."/>
            <person name="Carpenter L."/>
            <person name="White O."/>
            <person name="Peterson J.D."/>
            <person name="DeBoy R.T."/>
            <person name="Dodson R.J."/>
            <person name="Gwinn M.L."/>
            <person name="Haft D.H."/>
            <person name="Hickey E.K."/>
            <person name="Kolonay J.F."/>
            <person name="Nelson W.C."/>
            <person name="Umayam L.A."/>
            <person name="Ermolaeva M.D."/>
            <person name="Salzberg S.L."/>
            <person name="Delcher A."/>
            <person name="Utterback T.R."/>
            <person name="Weidman J.F."/>
            <person name="Khouri H.M."/>
            <person name="Gill J."/>
            <person name="Mikula A."/>
            <person name="Bishai W."/>
            <person name="Jacobs W.R. Jr."/>
            <person name="Venter J.C."/>
            <person name="Fraser C.M."/>
        </authorList>
    </citation>
    <scope>NUCLEOTIDE SEQUENCE [LARGE SCALE GENOMIC DNA]</scope>
    <source>
        <strain>CDC 1551 / Oshkosh</strain>
    </source>
</reference>
<gene>
    <name type="ordered locus">MT1137</name>
</gene>
<keyword id="KW-0963">Cytoplasm</keyword>
<keyword id="KW-0413">Isomerase</keyword>
<keyword id="KW-0442">Lipid degradation</keyword>
<keyword id="KW-0443">Lipid metabolism</keyword>
<keyword id="KW-0511">Multifunctional enzyme</keyword>
<keyword id="KW-0520">NAD</keyword>
<keyword id="KW-0560">Oxidoreductase</keyword>
<keyword id="KW-1185">Reference proteome</keyword>
<keyword id="KW-0753">Steroid metabolism</keyword>
<evidence type="ECO:0000250" key="1"/>
<evidence type="ECO:0000250" key="2">
    <source>
        <dbReference type="UniProtKB" id="P9WQP7"/>
    </source>
</evidence>
<evidence type="ECO:0000305" key="3"/>
<protein>
    <recommendedName>
        <fullName>3 beta-hydroxysteroid dehydrogenase/Delta 5--&gt;4-isomerase</fullName>
    </recommendedName>
    <alternativeName>
        <fullName>Cholesterol dehydrogenase</fullName>
    </alternativeName>
    <domain>
        <recommendedName>
            <fullName>3-beta-hydroxy-Delta(5)-steroid dehydrogenase</fullName>
            <shortName>3-beta-HSD</shortName>
            <shortName>3BHSD</shortName>
            <ecNumber evidence="2">1.1.1.145</ecNumber>
        </recommendedName>
        <alternativeName>
            <fullName>3-beta hydroxysterol dehydrogenase</fullName>
        </alternativeName>
        <alternativeName>
            <fullName>3-beta-hydroxy-5-ene steroid dehydrogenase</fullName>
        </alternativeName>
        <alternativeName>
            <fullName>Progesterone reductase</fullName>
        </alternativeName>
    </domain>
    <domain>
        <recommendedName>
            <fullName>Steroid Delta-isomerase</fullName>
            <ecNumber evidence="2">5.3.3.1</ecNumber>
        </recommendedName>
        <alternativeName>
            <fullName>Delta-5-3-ketosteroid isomerase</fullName>
        </alternativeName>
    </domain>
</protein>
<accession>P9WQP6</accession>
<accession>L0T7C3</accession>
<accession>O53454</accession>
<accession>Q7D8U6</accession>
<dbReference type="EC" id="1.1.1.145" evidence="2"/>
<dbReference type="EC" id="5.3.3.1" evidence="2"/>
<dbReference type="EMBL" id="AE000516">
    <property type="protein sequence ID" value="AAK45394.1"/>
    <property type="molecule type" value="Genomic_DNA"/>
</dbReference>
<dbReference type="PIR" id="H70897">
    <property type="entry name" value="H70897"/>
</dbReference>
<dbReference type="RefSeq" id="WP_003405840.1">
    <property type="nucleotide sequence ID" value="NZ_KK341227.1"/>
</dbReference>
<dbReference type="SMR" id="P9WQP6"/>
<dbReference type="KEGG" id="mtc:MT1137"/>
<dbReference type="PATRIC" id="fig|83331.31.peg.1229"/>
<dbReference type="HOGENOM" id="CLU_007383_6_8_11"/>
<dbReference type="UniPathway" id="UPA00062"/>
<dbReference type="Proteomes" id="UP000001020">
    <property type="component" value="Chromosome"/>
</dbReference>
<dbReference type="GO" id="GO:0005737">
    <property type="term" value="C:cytoplasm"/>
    <property type="evidence" value="ECO:0007669"/>
    <property type="project" value="UniProtKB-SubCell"/>
</dbReference>
<dbReference type="GO" id="GO:0102294">
    <property type="term" value="F:cholesterol dehydrogenase (NAD+) activity"/>
    <property type="evidence" value="ECO:0007669"/>
    <property type="project" value="RHEA"/>
</dbReference>
<dbReference type="GO" id="GO:0004769">
    <property type="term" value="F:steroid Delta-isomerase activity"/>
    <property type="evidence" value="ECO:0007669"/>
    <property type="project" value="UniProtKB-EC"/>
</dbReference>
<dbReference type="GO" id="GO:0016042">
    <property type="term" value="P:lipid catabolic process"/>
    <property type="evidence" value="ECO:0007669"/>
    <property type="project" value="UniProtKB-KW"/>
</dbReference>
<dbReference type="GO" id="GO:0006694">
    <property type="term" value="P:steroid biosynthetic process"/>
    <property type="evidence" value="ECO:0007669"/>
    <property type="project" value="UniProtKB-UniPathway"/>
</dbReference>
<dbReference type="CDD" id="cd05241">
    <property type="entry name" value="3b-HSD-like_SDR_e"/>
    <property type="match status" value="1"/>
</dbReference>
<dbReference type="FunFam" id="3.40.50.720:FF:000686">
    <property type="entry name" value="3 beta-hydroxysteroid dehydrogenase/Delta 5--&gt;4-isomerase"/>
    <property type="match status" value="1"/>
</dbReference>
<dbReference type="Gene3D" id="3.40.50.720">
    <property type="entry name" value="NAD(P)-binding Rossmann-like Domain"/>
    <property type="match status" value="1"/>
</dbReference>
<dbReference type="InterPro" id="IPR002225">
    <property type="entry name" value="3Beta_OHSteriod_DH/Estase"/>
</dbReference>
<dbReference type="InterPro" id="IPR050177">
    <property type="entry name" value="Lipid_A_modif_metabolic_enz"/>
</dbReference>
<dbReference type="InterPro" id="IPR036291">
    <property type="entry name" value="NAD(P)-bd_dom_sf"/>
</dbReference>
<dbReference type="PANTHER" id="PTHR43245">
    <property type="entry name" value="BIFUNCTIONAL POLYMYXIN RESISTANCE PROTEIN ARNA"/>
    <property type="match status" value="1"/>
</dbReference>
<dbReference type="PANTHER" id="PTHR43245:SF51">
    <property type="entry name" value="SHORT CHAIN DEHYDROGENASE_REDUCTASE FAMILY 42E, MEMBER 2"/>
    <property type="match status" value="1"/>
</dbReference>
<dbReference type="Pfam" id="PF01073">
    <property type="entry name" value="3Beta_HSD"/>
    <property type="match status" value="1"/>
</dbReference>
<dbReference type="SUPFAM" id="SSF51735">
    <property type="entry name" value="NAD(P)-binding Rossmann-fold domains"/>
    <property type="match status" value="1"/>
</dbReference>
<feature type="chain" id="PRO_0000426739" description="3 beta-hydroxysteroid dehydrogenase/Delta 5--&gt;4-isomerase">
    <location>
        <begin position="1"/>
        <end position="370"/>
    </location>
</feature>
<feature type="active site" description="Proton acceptor" evidence="1">
    <location>
        <position position="158"/>
    </location>
</feature>
<feature type="binding site" evidence="1">
    <location>
        <position position="162"/>
    </location>
    <ligand>
        <name>NAD(+)</name>
        <dbReference type="ChEBI" id="CHEBI:57540"/>
    </ligand>
</feature>
<organism>
    <name type="scientific">Mycobacterium tuberculosis (strain CDC 1551 / Oshkosh)</name>
    <dbReference type="NCBI Taxonomy" id="83331"/>
    <lineage>
        <taxon>Bacteria</taxon>
        <taxon>Bacillati</taxon>
        <taxon>Actinomycetota</taxon>
        <taxon>Actinomycetes</taxon>
        <taxon>Mycobacteriales</taxon>
        <taxon>Mycobacteriaceae</taxon>
        <taxon>Mycobacterium</taxon>
        <taxon>Mycobacterium tuberculosis complex</taxon>
    </lineage>
</organism>
<comment type="function">
    <text evidence="2">3-beta-HSD is a bifunctional enzyme, that catalyzes the oxidation and isomerization of cholesterol, pregnenolone, and dehydroepiandrosterone (DHEA) into cholest-4-en-3-one, progesterone, and androsterone, respectively.</text>
</comment>
<comment type="catalytic activity">
    <reaction evidence="2">
        <text>a 3beta-hydroxy-Delta(5)-steroid + NAD(+) = a 3-oxo-Delta(5)-steroid + NADH + H(+)</text>
        <dbReference type="Rhea" id="RHEA:24076"/>
        <dbReference type="ChEBI" id="CHEBI:1722"/>
        <dbReference type="ChEBI" id="CHEBI:15378"/>
        <dbReference type="ChEBI" id="CHEBI:47907"/>
        <dbReference type="ChEBI" id="CHEBI:57540"/>
        <dbReference type="ChEBI" id="CHEBI:57945"/>
        <dbReference type="EC" id="1.1.1.145"/>
    </reaction>
</comment>
<comment type="catalytic activity">
    <reaction evidence="2">
        <text>cholesterol + NAD(+) = cholest-5-en-3-one + NADH + H(+)</text>
        <dbReference type="Rhea" id="RHEA:35459"/>
        <dbReference type="ChEBI" id="CHEBI:15378"/>
        <dbReference type="ChEBI" id="CHEBI:16113"/>
        <dbReference type="ChEBI" id="CHEBI:57540"/>
        <dbReference type="ChEBI" id="CHEBI:57945"/>
        <dbReference type="ChEBI" id="CHEBI:63906"/>
    </reaction>
    <physiologicalReaction direction="left-to-right" evidence="2">
        <dbReference type="Rhea" id="RHEA:35460"/>
    </physiologicalReaction>
</comment>
<comment type="catalytic activity">
    <reaction evidence="2">
        <text>pregnenolone + NAD(+) = pregn-5-ene-3,20-dione + NADH + H(+)</text>
        <dbReference type="Rhea" id="RHEA:43924"/>
        <dbReference type="ChEBI" id="CHEBI:15378"/>
        <dbReference type="ChEBI" id="CHEBI:16581"/>
        <dbReference type="ChEBI" id="CHEBI:57540"/>
        <dbReference type="ChEBI" id="CHEBI:57945"/>
        <dbReference type="ChEBI" id="CHEBI:63837"/>
    </reaction>
    <physiologicalReaction direction="left-to-right" evidence="2">
        <dbReference type="Rhea" id="RHEA:43925"/>
    </physiologicalReaction>
</comment>
<comment type="catalytic activity">
    <reaction evidence="2">
        <text>3beta-hydroxyandrost-5-en-17-one + NAD(+) = androst-5-ene-3,17-dione + NADH + H(+)</text>
        <dbReference type="Rhea" id="RHEA:43932"/>
        <dbReference type="ChEBI" id="CHEBI:15378"/>
        <dbReference type="ChEBI" id="CHEBI:28689"/>
        <dbReference type="ChEBI" id="CHEBI:57540"/>
        <dbReference type="ChEBI" id="CHEBI:57945"/>
        <dbReference type="ChEBI" id="CHEBI:83865"/>
        <dbReference type="EC" id="1.1.1.145"/>
    </reaction>
    <physiologicalReaction direction="left-to-right" evidence="2">
        <dbReference type="Rhea" id="RHEA:43933"/>
    </physiologicalReaction>
</comment>
<comment type="catalytic activity">
    <reaction evidence="2">
        <text>a 3-oxo-Delta(5)-steroid = a 3-oxo-Delta(4)-steroid</text>
        <dbReference type="Rhea" id="RHEA:14709"/>
        <dbReference type="ChEBI" id="CHEBI:47907"/>
        <dbReference type="ChEBI" id="CHEBI:47909"/>
        <dbReference type="EC" id="5.3.3.1"/>
    </reaction>
</comment>
<comment type="catalytic activity">
    <reaction evidence="2">
        <text>cholest-5-en-3-one = cholest-4-en-3-one</text>
        <dbReference type="Rhea" id="RHEA:32187"/>
        <dbReference type="ChEBI" id="CHEBI:16175"/>
        <dbReference type="ChEBI" id="CHEBI:63906"/>
        <dbReference type="EC" id="5.3.3.1"/>
    </reaction>
    <physiologicalReaction direction="left-to-right" evidence="2">
        <dbReference type="Rhea" id="RHEA:32188"/>
    </physiologicalReaction>
</comment>
<comment type="catalytic activity">
    <reaction evidence="2">
        <text>pregn-5-ene-3,20-dione = progesterone</text>
        <dbReference type="Rhea" id="RHEA:43928"/>
        <dbReference type="ChEBI" id="CHEBI:17026"/>
        <dbReference type="ChEBI" id="CHEBI:63837"/>
    </reaction>
    <physiologicalReaction direction="left-to-right" evidence="2">
        <dbReference type="Rhea" id="RHEA:43929"/>
    </physiologicalReaction>
</comment>
<comment type="catalytic activity">
    <reaction evidence="2">
        <text>androst-5-ene-3,17-dione = androst-4-ene-3,17-dione</text>
        <dbReference type="Rhea" id="RHEA:43936"/>
        <dbReference type="ChEBI" id="CHEBI:16422"/>
        <dbReference type="ChEBI" id="CHEBI:83865"/>
    </reaction>
    <physiologicalReaction direction="left-to-right" evidence="2">
        <dbReference type="Rhea" id="RHEA:43937"/>
    </physiologicalReaction>
</comment>
<comment type="pathway">
    <text>Lipid metabolism; steroid biosynthesis.</text>
</comment>
<comment type="subunit">
    <text evidence="1">Monomer.</text>
</comment>
<comment type="subcellular location">
    <subcellularLocation>
        <location evidence="1">Cytoplasm</location>
    </subcellularLocation>
</comment>
<comment type="similarity">
    <text evidence="3">Belongs to the 3-beta-HSD family.</text>
</comment>